<organism>
    <name type="scientific">Bordetella pertussis (strain Tohama I / ATCC BAA-589 / NCTC 13251)</name>
    <dbReference type="NCBI Taxonomy" id="257313"/>
    <lineage>
        <taxon>Bacteria</taxon>
        <taxon>Pseudomonadati</taxon>
        <taxon>Pseudomonadota</taxon>
        <taxon>Betaproteobacteria</taxon>
        <taxon>Burkholderiales</taxon>
        <taxon>Alcaligenaceae</taxon>
        <taxon>Bordetella</taxon>
    </lineage>
</organism>
<accession>Q7VY99</accession>
<keyword id="KW-0963">Cytoplasm</keyword>
<keyword id="KW-0570">Pentose shunt</keyword>
<keyword id="KW-1185">Reference proteome</keyword>
<keyword id="KW-0704">Schiff base</keyword>
<keyword id="KW-0808">Transferase</keyword>
<reference key="1">
    <citation type="journal article" date="2003" name="Nat. Genet.">
        <title>Comparative analysis of the genome sequences of Bordetella pertussis, Bordetella parapertussis and Bordetella bronchiseptica.</title>
        <authorList>
            <person name="Parkhill J."/>
            <person name="Sebaihia M."/>
            <person name="Preston A."/>
            <person name="Murphy L.D."/>
            <person name="Thomson N.R."/>
            <person name="Harris D.E."/>
            <person name="Holden M.T.G."/>
            <person name="Churcher C.M."/>
            <person name="Bentley S.D."/>
            <person name="Mungall K.L."/>
            <person name="Cerdeno-Tarraga A.-M."/>
            <person name="Temple L."/>
            <person name="James K.D."/>
            <person name="Harris B."/>
            <person name="Quail M.A."/>
            <person name="Achtman M."/>
            <person name="Atkin R."/>
            <person name="Baker S."/>
            <person name="Basham D."/>
            <person name="Bason N."/>
            <person name="Cherevach I."/>
            <person name="Chillingworth T."/>
            <person name="Collins M."/>
            <person name="Cronin A."/>
            <person name="Davis P."/>
            <person name="Doggett J."/>
            <person name="Feltwell T."/>
            <person name="Goble A."/>
            <person name="Hamlin N."/>
            <person name="Hauser H."/>
            <person name="Holroyd S."/>
            <person name="Jagels K."/>
            <person name="Leather S."/>
            <person name="Moule S."/>
            <person name="Norberczak H."/>
            <person name="O'Neil S."/>
            <person name="Ormond D."/>
            <person name="Price C."/>
            <person name="Rabbinowitsch E."/>
            <person name="Rutter S."/>
            <person name="Sanders M."/>
            <person name="Saunders D."/>
            <person name="Seeger K."/>
            <person name="Sharp S."/>
            <person name="Simmonds M."/>
            <person name="Skelton J."/>
            <person name="Squares R."/>
            <person name="Squares S."/>
            <person name="Stevens K."/>
            <person name="Unwin L."/>
            <person name="Whitehead S."/>
            <person name="Barrell B.G."/>
            <person name="Maskell D.J."/>
        </authorList>
    </citation>
    <scope>NUCLEOTIDE SEQUENCE [LARGE SCALE GENOMIC DNA]</scope>
    <source>
        <strain>Tohama I / ATCC BAA-589 / NCTC 13251</strain>
    </source>
</reference>
<protein>
    <recommendedName>
        <fullName evidence="2">Transaldolase</fullName>
        <ecNumber evidence="2">2.2.1.2</ecNumber>
    </recommendedName>
</protein>
<name>TAL_BORPE</name>
<sequence>MPSQLEALRRHTVVVADTGDFEAMRALRPTDATTNPSLILKAVQQEAYRPLLVQTARAHQGASPAEITDRLLVAFGRQILDIVPGRVSTEVDARLSFDTRATVERARGLIALYQAAGVPRERVLIKIASTWEGIQAARVLQAEGIRCNLTLLFCLPQAAACADAGVQLISPFVGRIYDWHKKNAGAEWVEDARRGANDPGVQSVSRIYRYYKRFGIETEIMGASFRNVDQILALAGCDLLTISPELLTRLAQTEGEVPAALSPQAGHDDADAVRLDGGEVAFRTQLNEDAMASEKLSEGIRLFVADARKLDALIESHGAA</sequence>
<dbReference type="EC" id="2.2.1.2" evidence="2"/>
<dbReference type="EMBL" id="BX640415">
    <property type="protein sequence ID" value="CAE41741.1"/>
    <property type="molecule type" value="Genomic_DNA"/>
</dbReference>
<dbReference type="RefSeq" id="NP_880193.1">
    <property type="nucleotide sequence ID" value="NC_002929.2"/>
</dbReference>
<dbReference type="RefSeq" id="WP_010930364.1">
    <property type="nucleotide sequence ID" value="NZ_CP039022.1"/>
</dbReference>
<dbReference type="SMR" id="Q7VY99"/>
<dbReference type="STRING" id="257313.BP1451"/>
<dbReference type="PaxDb" id="257313-BP1451"/>
<dbReference type="GeneID" id="69601364"/>
<dbReference type="KEGG" id="bpe:BP1451"/>
<dbReference type="PATRIC" id="fig|257313.5.peg.1556"/>
<dbReference type="eggNOG" id="COG0176">
    <property type="taxonomic scope" value="Bacteria"/>
</dbReference>
<dbReference type="HOGENOM" id="CLU_047470_0_1_4"/>
<dbReference type="UniPathway" id="UPA00115">
    <property type="reaction ID" value="UER00414"/>
</dbReference>
<dbReference type="Proteomes" id="UP000002676">
    <property type="component" value="Chromosome"/>
</dbReference>
<dbReference type="GO" id="GO:0005737">
    <property type="term" value="C:cytoplasm"/>
    <property type="evidence" value="ECO:0007669"/>
    <property type="project" value="UniProtKB-SubCell"/>
</dbReference>
<dbReference type="GO" id="GO:0004801">
    <property type="term" value="F:transaldolase activity"/>
    <property type="evidence" value="ECO:0000250"/>
    <property type="project" value="UniProtKB"/>
</dbReference>
<dbReference type="GO" id="GO:0005975">
    <property type="term" value="P:carbohydrate metabolic process"/>
    <property type="evidence" value="ECO:0007669"/>
    <property type="project" value="InterPro"/>
</dbReference>
<dbReference type="GO" id="GO:0006098">
    <property type="term" value="P:pentose-phosphate shunt"/>
    <property type="evidence" value="ECO:0007669"/>
    <property type="project" value="UniProtKB-UniRule"/>
</dbReference>
<dbReference type="CDD" id="cd00957">
    <property type="entry name" value="Transaldolase_TalAB"/>
    <property type="match status" value="1"/>
</dbReference>
<dbReference type="FunFam" id="3.20.20.70:FF:000131">
    <property type="entry name" value="Transaldolase"/>
    <property type="match status" value="1"/>
</dbReference>
<dbReference type="Gene3D" id="3.20.20.70">
    <property type="entry name" value="Aldolase class I"/>
    <property type="match status" value="1"/>
</dbReference>
<dbReference type="HAMAP" id="MF_00492">
    <property type="entry name" value="Transaldolase_1"/>
    <property type="match status" value="1"/>
</dbReference>
<dbReference type="InterPro" id="IPR013785">
    <property type="entry name" value="Aldolase_TIM"/>
</dbReference>
<dbReference type="InterPro" id="IPR001585">
    <property type="entry name" value="TAL/FSA"/>
</dbReference>
<dbReference type="InterPro" id="IPR004730">
    <property type="entry name" value="Transaldolase_1"/>
</dbReference>
<dbReference type="InterPro" id="IPR018225">
    <property type="entry name" value="Transaldolase_AS"/>
</dbReference>
<dbReference type="NCBIfam" id="TIGR00874">
    <property type="entry name" value="talAB"/>
    <property type="match status" value="1"/>
</dbReference>
<dbReference type="PANTHER" id="PTHR10683">
    <property type="entry name" value="TRANSALDOLASE"/>
    <property type="match status" value="1"/>
</dbReference>
<dbReference type="PANTHER" id="PTHR10683:SF18">
    <property type="entry name" value="TRANSALDOLASE"/>
    <property type="match status" value="1"/>
</dbReference>
<dbReference type="Pfam" id="PF00923">
    <property type="entry name" value="TAL_FSA"/>
    <property type="match status" value="1"/>
</dbReference>
<dbReference type="SUPFAM" id="SSF51569">
    <property type="entry name" value="Aldolase"/>
    <property type="match status" value="1"/>
</dbReference>
<dbReference type="PROSITE" id="PS01054">
    <property type="entry name" value="TRANSALDOLASE_1"/>
    <property type="match status" value="1"/>
</dbReference>
<dbReference type="PROSITE" id="PS00958">
    <property type="entry name" value="TRANSALDOLASE_2"/>
    <property type="match status" value="1"/>
</dbReference>
<comment type="function">
    <text evidence="2">Transaldolase is important for the balance of metabolites in the pentose-phosphate pathway.</text>
</comment>
<comment type="catalytic activity">
    <reaction evidence="2">
        <text>D-sedoheptulose 7-phosphate + D-glyceraldehyde 3-phosphate = D-erythrose 4-phosphate + beta-D-fructose 6-phosphate</text>
        <dbReference type="Rhea" id="RHEA:17053"/>
        <dbReference type="ChEBI" id="CHEBI:16897"/>
        <dbReference type="ChEBI" id="CHEBI:57483"/>
        <dbReference type="ChEBI" id="CHEBI:57634"/>
        <dbReference type="ChEBI" id="CHEBI:59776"/>
        <dbReference type="EC" id="2.2.1.2"/>
    </reaction>
</comment>
<comment type="pathway">
    <text evidence="2">Carbohydrate degradation; pentose phosphate pathway; D-glyceraldehyde 3-phosphate and beta-D-fructose 6-phosphate from D-ribose 5-phosphate and D-xylulose 5-phosphate (non-oxidative stage): step 2/3.</text>
</comment>
<comment type="subunit">
    <text evidence="1">Homodimer.</text>
</comment>
<comment type="subcellular location">
    <subcellularLocation>
        <location evidence="2">Cytoplasm</location>
    </subcellularLocation>
</comment>
<comment type="similarity">
    <text evidence="2">Belongs to the transaldolase family. Type 1 subfamily.</text>
</comment>
<gene>
    <name evidence="2" type="primary">tal</name>
    <name type="ordered locus">BP1451</name>
</gene>
<proteinExistence type="inferred from homology"/>
<evidence type="ECO:0000250" key="1"/>
<evidence type="ECO:0000255" key="2">
    <source>
        <dbReference type="HAMAP-Rule" id="MF_00492"/>
    </source>
</evidence>
<feature type="chain" id="PRO_0000173581" description="Transaldolase">
    <location>
        <begin position="1"/>
        <end position="320"/>
    </location>
</feature>
<feature type="active site" description="Schiff-base intermediate with substrate" evidence="2">
    <location>
        <position position="126"/>
    </location>
</feature>